<comment type="function">
    <text evidence="4 5 6">Membrane-bound metalloprotease which catalyzes the removal of a penultimate prolyl residue from the N-termini of peptides, such as Arg-Pro-Pro. May play a role in the metabolism of the vasodilator bradykinin.</text>
</comment>
<comment type="catalytic activity">
    <reaction evidence="4 5 6">
        <text>Release of any N-terminal amino acid, including proline, that is linked to proline, even from a dipeptide or tripeptide.</text>
        <dbReference type="EC" id="3.4.11.9"/>
    </reaction>
</comment>
<comment type="cofactor">
    <cofactor evidence="4">
        <name>Zn(2+)</name>
        <dbReference type="ChEBI" id="CHEBI:29105"/>
    </cofactor>
</comment>
<comment type="activity regulation">
    <text evidence="4 6">Inhibited by apstatin and the metal ion chelator EDTA (PubMed:8870669). Potently inhibited by the converting enzyme inhibitors cilazaprilat; enalaprilat; L155,212; ramiprilat and YS 980 (PubMed:1312513). Also inhibited to a lesser extent by indolaprilat; quinaprilat; spiraprilat; captopril and zofenoprilat (PubMed:1312513).</text>
</comment>
<comment type="subunit">
    <text evidence="5">Homotrimer.</text>
</comment>
<comment type="subcellular location">
    <subcellularLocation>
        <location evidence="10 11">Cell membrane</location>
        <topology evidence="5 6">Lipid-anchor</topology>
        <topology evidence="5 6">GPI-anchor</topology>
    </subcellularLocation>
</comment>
<comment type="tissue specificity">
    <text evidence="6">Kidney.</text>
</comment>
<comment type="PTM">
    <text evidence="5">N-glycosylated.</text>
</comment>
<comment type="similarity">
    <text evidence="9">Belongs to the peptidase M24B family.</text>
</comment>
<proteinExistence type="evidence at protein level"/>
<sequence length="673" mass="75756">MAQACWGCYPWLVLICACAWGHPKSLNQREDVRNCSTSPPYLPVTAVNTTAQLTALREQMLTQNLSAYIIPDTDAHMSEYIGECDQRRAWITGFIGSAGIAVVTERKAALWTDSRYWTQAERQMDCNWELHKEVSTGHIVTWLLTEIPVGGRVGFDPFLFSIDSWESYDVALQDADRELVSITVNLVDLVWGSERPPLPNAPIYALQEAFAGSTWQEKVSNIRSQMQKHHERPTAVLLSALDETAWLFNLRSSDIPYNPFFYSYTLLTDSSIRLFANKSRFSSETLQYLNSSCNSSMCVQLEDYSQIRDSIQAYTSGDVKIWIGTRYTSYGLYEVIPKEKLVEDDYSPVMITKAVKNSREQALLKASHVRDAVAVIRYLAWLEKNVPTGTVDEFSGAKRVEEFRGEEEFFSGPSFETISASGLNAALAHYSPTKELHRKLSSDEMYLLDSGGQYWDGTTDITRTVHWGTPSAFQKEAYTRVLIGNIDLSRLVFPAATSGRVVEAFARKALWDVGLNYGHGTGHGIGNFLCVHEWPVGFQYGNIPMAEGMFTSIEPGYYQDGEFGIRLEDVALVVEAKTKYPGTYLTFEVVSLVPYDRKLIDVSLLSPEQLQYLNRYYQAIREKVGPELQRRGLLEELSWLQRHTEPLSARAAPTTSLGSLMTVSALAILGWSV</sequence>
<evidence type="ECO:0000250" key="1"/>
<evidence type="ECO:0000250" key="2">
    <source>
        <dbReference type="UniProtKB" id="O44750"/>
    </source>
</evidence>
<evidence type="ECO:0000255" key="3"/>
<evidence type="ECO:0000269" key="4">
    <source>
    </source>
</evidence>
<evidence type="ECO:0000269" key="5">
    <source>
    </source>
</evidence>
<evidence type="ECO:0000269" key="6">
    <source>
    </source>
</evidence>
<evidence type="ECO:0000303" key="7">
    <source>
    </source>
</evidence>
<evidence type="ECO:0000303" key="8">
    <source>
    </source>
</evidence>
<evidence type="ECO:0000305" key="9"/>
<evidence type="ECO:0000305" key="10">
    <source>
    </source>
</evidence>
<evidence type="ECO:0000305" key="11">
    <source>
    </source>
</evidence>
<gene>
    <name type="primary">XPNPEP2</name>
</gene>
<accession>Q95333</accession>
<feature type="signal peptide" evidence="3">
    <location>
        <begin position="1"/>
        <end position="21"/>
    </location>
</feature>
<feature type="chain" id="PRO_0000026831" description="Xaa-Pro aminopeptidase 2">
    <location>
        <begin position="22"/>
        <end position="649"/>
    </location>
</feature>
<feature type="propeptide" id="PRO_0000026832" description="Removed in mature form" evidence="9">
    <location>
        <begin position="650"/>
        <end position="673"/>
    </location>
</feature>
<feature type="binding site" evidence="2">
    <location>
        <position position="115"/>
    </location>
    <ligand>
        <name>substrate</name>
    </ligand>
</feature>
<feature type="binding site" evidence="2">
    <location>
        <position position="429"/>
    </location>
    <ligand>
        <name>substrate</name>
    </ligand>
</feature>
<feature type="binding site" evidence="1">
    <location>
        <position position="449"/>
    </location>
    <ligand>
        <name>Mn(2+)</name>
        <dbReference type="ChEBI" id="CHEBI:29035"/>
        <label>2</label>
    </ligand>
</feature>
<feature type="binding site" evidence="2">
    <location>
        <position position="449"/>
    </location>
    <ligand>
        <name>Zn(2+)</name>
        <dbReference type="ChEBI" id="CHEBI:29105"/>
        <label>1</label>
    </ligand>
</feature>
<feature type="binding site" evidence="2">
    <location>
        <position position="460"/>
    </location>
    <ligand>
        <name>Zn(2+)</name>
        <dbReference type="ChEBI" id="CHEBI:29105"/>
        <label>1</label>
    </ligand>
</feature>
<feature type="binding site" evidence="2">
    <location>
        <position position="460"/>
    </location>
    <ligand>
        <name>Zn(2+)</name>
        <dbReference type="ChEBI" id="CHEBI:29105"/>
        <label>2</label>
    </ligand>
</feature>
<feature type="binding site" evidence="2">
    <location>
        <position position="523"/>
    </location>
    <ligand>
        <name>substrate</name>
    </ligand>
</feature>
<feature type="binding site" evidence="2">
    <location>
        <position position="523"/>
    </location>
    <ligand>
        <name>Zn(2+)</name>
        <dbReference type="ChEBI" id="CHEBI:29105"/>
        <label>2</label>
    </ligand>
</feature>
<feature type="binding site" evidence="2">
    <location>
        <position position="532"/>
    </location>
    <ligand>
        <name>substrate</name>
    </ligand>
</feature>
<feature type="binding site" evidence="2">
    <location>
        <position position="554"/>
    </location>
    <ligand>
        <name>substrate</name>
    </ligand>
</feature>
<feature type="binding site" evidence="2">
    <location>
        <position position="554"/>
    </location>
    <ligand>
        <name>Zn(2+)</name>
        <dbReference type="ChEBI" id="CHEBI:29105"/>
        <label>2</label>
    </ligand>
</feature>
<feature type="binding site" evidence="2">
    <location>
        <position position="568"/>
    </location>
    <ligand>
        <name>Zn(2+)</name>
        <dbReference type="ChEBI" id="CHEBI:29105"/>
        <label>1</label>
    </ligand>
</feature>
<feature type="binding site" evidence="2">
    <location>
        <position position="568"/>
    </location>
    <ligand>
        <name>Zn(2+)</name>
        <dbReference type="ChEBI" id="CHEBI:29105"/>
        <label>2</label>
    </ligand>
</feature>
<feature type="lipid moiety-binding region" description="GPI-anchor amidated alanine" evidence="5">
    <location>
        <position position="649"/>
    </location>
</feature>
<feature type="glycosylation site" description="N-linked (GlcNAc...) asparagine" evidence="5">
    <location>
        <position position="34"/>
    </location>
</feature>
<feature type="glycosylation site" description="N-linked (GlcNAc...) asparagine" evidence="5">
    <location>
        <position position="48"/>
    </location>
</feature>
<feature type="glycosylation site" description="N-linked (GlcNAc...) asparagine" evidence="5">
    <location>
        <position position="64"/>
    </location>
</feature>
<feature type="glycosylation site" description="N-linked (GlcNAc...) asparagine" evidence="5">
    <location>
        <position position="277"/>
    </location>
</feature>
<feature type="glycosylation site" description="N-linked (GlcNAc...) asparagine" evidence="5">
    <location>
        <position position="290"/>
    </location>
</feature>
<feature type="glycosylation site" description="N-linked (GlcNAc...) asparagine" evidence="5">
    <location>
        <position position="294"/>
    </location>
</feature>
<feature type="sequence conflict" description="In Ref. 2; AA sequence." evidence="9" ref="2">
    <original>C</original>
    <variation>G</variation>
    <location>
        <position position="530"/>
    </location>
</feature>
<reference key="1">
    <citation type="journal article" date="1996" name="Biochem. J.">
        <title>Molecular cloning and expression in COS-1 cells of pig kidney aminopeptidase P.</title>
        <authorList>
            <person name="Hyde R.J."/>
            <person name="Hooper N.M."/>
            <person name="Turner A.J."/>
        </authorList>
    </citation>
    <scope>NUCLEOTIDE SEQUENCE [MRNA]</scope>
    <scope>CATALYTIC ACTIVITY</scope>
    <scope>ACTIVITY REGULATION</scope>
    <scope>SUBCELLULAR LOCATION</scope>
    <scope>TISSUE SPECIFICITY</scope>
    <scope>GPI-ANCHOR</scope>
    <source>
        <tissue evidence="8">Kidney cortex</tissue>
    </source>
</reference>
<reference key="2">
    <citation type="journal article" date="1995" name="Eur. J. Biochem.">
        <title>Purification and amino acid sequence of aminopeptidase P from pig kidney.</title>
        <authorList>
            <person name="Vergas Romero C."/>
            <person name="Neudorfer I."/>
            <person name="Mann K."/>
            <person name="Schaefer W."/>
        </authorList>
    </citation>
    <scope>PROTEIN SEQUENCE OF 27-649</scope>
    <scope>FUNCTION</scope>
    <scope>CATALYTIC ACTIVITY</scope>
    <scope>SUBUNIT</scope>
    <scope>SUBCELLULAR LOCATION</scope>
    <scope>GLYCOSYLATION AT ASN-34; ASN-48; ASN-64; ASN-277; ASN-290 AND ASN-294</scope>
    <scope>GPI-ANCHOR AT ALA-649</scope>
    <source>
        <tissue evidence="7">Kidney cortex</tissue>
    </source>
</reference>
<reference key="3">
    <citation type="journal article" date="1992" name="Hypertension">
        <title>Inhibition by converting enzyme inhibitors of pig kidney aminopeptidase P.</title>
        <authorList>
            <person name="Hooper N.M."/>
            <person name="Hryszko J."/>
            <person name="Oppong S.Y."/>
            <person name="Turner A.J."/>
        </authorList>
    </citation>
    <scope>FUNCTION</scope>
    <scope>CATALYTIC ACTIVITY</scope>
    <scope>COFACTOR</scope>
    <scope>ACTIVITY REGULATION</scope>
</reference>
<organism>
    <name type="scientific">Sus scrofa</name>
    <name type="common">Pig</name>
    <dbReference type="NCBI Taxonomy" id="9823"/>
    <lineage>
        <taxon>Eukaryota</taxon>
        <taxon>Metazoa</taxon>
        <taxon>Chordata</taxon>
        <taxon>Craniata</taxon>
        <taxon>Vertebrata</taxon>
        <taxon>Euteleostomi</taxon>
        <taxon>Mammalia</taxon>
        <taxon>Eutheria</taxon>
        <taxon>Laurasiatheria</taxon>
        <taxon>Artiodactyla</taxon>
        <taxon>Suina</taxon>
        <taxon>Suidae</taxon>
        <taxon>Sus</taxon>
    </lineage>
</organism>
<dbReference type="EC" id="3.4.11.9" evidence="4 6"/>
<dbReference type="EMBL" id="U55039">
    <property type="protein sequence ID" value="AAC48664.1"/>
    <property type="molecule type" value="mRNA"/>
</dbReference>
<dbReference type="PIR" id="S72440">
    <property type="entry name" value="S72440"/>
</dbReference>
<dbReference type="RefSeq" id="NP_001004048.1">
    <property type="nucleotide sequence ID" value="NM_001004048.1"/>
</dbReference>
<dbReference type="RefSeq" id="XP_005673955.1">
    <property type="nucleotide sequence ID" value="XM_005673898.3"/>
</dbReference>
<dbReference type="RefSeq" id="XP_013841867.1">
    <property type="nucleotide sequence ID" value="XM_013986413.2"/>
</dbReference>
<dbReference type="SMR" id="Q95333"/>
<dbReference type="FunCoup" id="Q95333">
    <property type="interactions" value="85"/>
</dbReference>
<dbReference type="STRING" id="9823.ENSSSCP00000043372"/>
<dbReference type="MEROPS" id="M24.005"/>
<dbReference type="GlyCosmos" id="Q95333">
    <property type="glycosylation" value="6 sites, No reported glycans"/>
</dbReference>
<dbReference type="GlyGen" id="Q95333">
    <property type="glycosylation" value="6 sites"/>
</dbReference>
<dbReference type="iPTMnet" id="Q95333"/>
<dbReference type="PaxDb" id="9823-ENSSSCP00000013450"/>
<dbReference type="PeptideAtlas" id="Q95333"/>
<dbReference type="Ensembl" id="ENSSSCT00000013832.5">
    <property type="protein sequence ID" value="ENSSSCP00000013450.4"/>
    <property type="gene ID" value="ENSSSCG00000012651.6"/>
</dbReference>
<dbReference type="Ensembl" id="ENSSSCT00055008082.1">
    <property type="protein sequence ID" value="ENSSSCP00055006400.1"/>
    <property type="gene ID" value="ENSSSCG00055004094.1"/>
</dbReference>
<dbReference type="Ensembl" id="ENSSSCT00070059641.1">
    <property type="protein sequence ID" value="ENSSSCP00070050803.1"/>
    <property type="gene ID" value="ENSSSCG00070029594.1"/>
</dbReference>
<dbReference type="Ensembl" id="ENSSSCT00115002588">
    <property type="protein sequence ID" value="ENSSSCP00115002411"/>
    <property type="gene ID" value="ENSSSCG00115001522"/>
</dbReference>
<dbReference type="Ensembl" id="ENSSSCT00130041161">
    <property type="protein sequence ID" value="ENSSSCP00130028993"/>
    <property type="gene ID" value="ENSSSCG00130021226"/>
</dbReference>
<dbReference type="GeneID" id="445538"/>
<dbReference type="KEGG" id="ssc:445538"/>
<dbReference type="CTD" id="7512"/>
<dbReference type="VGNC" id="VGNC:95001">
    <property type="gene designation" value="XPNPEP2"/>
</dbReference>
<dbReference type="eggNOG" id="KOG2413">
    <property type="taxonomic scope" value="Eukaryota"/>
</dbReference>
<dbReference type="GeneTree" id="ENSGT00940000157196"/>
<dbReference type="HOGENOM" id="CLU_011781_2_2_1"/>
<dbReference type="InParanoid" id="Q95333"/>
<dbReference type="OMA" id="LTHFRYT"/>
<dbReference type="OrthoDB" id="9995434at2759"/>
<dbReference type="TreeFam" id="TF314183"/>
<dbReference type="Reactome" id="R-SSC-163125">
    <property type="pathway name" value="Post-translational modification: synthesis of GPI-anchored proteins"/>
</dbReference>
<dbReference type="Proteomes" id="UP000008227">
    <property type="component" value="Chromosome X"/>
</dbReference>
<dbReference type="Proteomes" id="UP000314985">
    <property type="component" value="Unassembled WGS sequence"/>
</dbReference>
<dbReference type="Proteomes" id="UP000694570">
    <property type="component" value="Unplaced"/>
</dbReference>
<dbReference type="Proteomes" id="UP000694571">
    <property type="component" value="Unplaced"/>
</dbReference>
<dbReference type="Proteomes" id="UP000694720">
    <property type="component" value="Unplaced"/>
</dbReference>
<dbReference type="Proteomes" id="UP000694722">
    <property type="component" value="Unplaced"/>
</dbReference>
<dbReference type="Proteomes" id="UP000694723">
    <property type="component" value="Unplaced"/>
</dbReference>
<dbReference type="Proteomes" id="UP000694724">
    <property type="component" value="Unplaced"/>
</dbReference>
<dbReference type="Proteomes" id="UP000694725">
    <property type="component" value="Unplaced"/>
</dbReference>
<dbReference type="Proteomes" id="UP000694726">
    <property type="component" value="Unplaced"/>
</dbReference>
<dbReference type="Proteomes" id="UP000694727">
    <property type="component" value="Unplaced"/>
</dbReference>
<dbReference type="Proteomes" id="UP000694728">
    <property type="component" value="Unplaced"/>
</dbReference>
<dbReference type="GO" id="GO:0070062">
    <property type="term" value="C:extracellular exosome"/>
    <property type="evidence" value="ECO:0007669"/>
    <property type="project" value="Ensembl"/>
</dbReference>
<dbReference type="GO" id="GO:0005886">
    <property type="term" value="C:plasma membrane"/>
    <property type="evidence" value="ECO:0007669"/>
    <property type="project" value="UniProtKB-SubCell"/>
</dbReference>
<dbReference type="GO" id="GO:0098552">
    <property type="term" value="C:side of membrane"/>
    <property type="evidence" value="ECO:0007669"/>
    <property type="project" value="UniProtKB-KW"/>
</dbReference>
<dbReference type="GO" id="GO:0046872">
    <property type="term" value="F:metal ion binding"/>
    <property type="evidence" value="ECO:0007669"/>
    <property type="project" value="UniProtKB-KW"/>
</dbReference>
<dbReference type="GO" id="GO:0070006">
    <property type="term" value="F:metalloaminopeptidase activity"/>
    <property type="evidence" value="ECO:0007669"/>
    <property type="project" value="InterPro"/>
</dbReference>
<dbReference type="GO" id="GO:0006508">
    <property type="term" value="P:proteolysis"/>
    <property type="evidence" value="ECO:0007669"/>
    <property type="project" value="UniProtKB-KW"/>
</dbReference>
<dbReference type="CDD" id="cd01085">
    <property type="entry name" value="APP"/>
    <property type="match status" value="1"/>
</dbReference>
<dbReference type="FunFam" id="3.40.350.10:FF:000008">
    <property type="entry name" value="xaa-Pro aminopeptidase 2"/>
    <property type="match status" value="1"/>
</dbReference>
<dbReference type="FunFam" id="3.90.230.10:FF:000009">
    <property type="entry name" value="xaa-Pro aminopeptidase 2"/>
    <property type="match status" value="1"/>
</dbReference>
<dbReference type="FunFam" id="3.40.350.10:FF:000003">
    <property type="entry name" value="Xaa-pro aminopeptidase P"/>
    <property type="match status" value="1"/>
</dbReference>
<dbReference type="Gene3D" id="3.90.230.10">
    <property type="entry name" value="Creatinase/methionine aminopeptidase superfamily"/>
    <property type="match status" value="1"/>
</dbReference>
<dbReference type="Gene3D" id="3.40.350.10">
    <property type="entry name" value="Creatinase/prolidase N-terminal domain"/>
    <property type="match status" value="2"/>
</dbReference>
<dbReference type="InterPro" id="IPR029149">
    <property type="entry name" value="Creatin/AminoP/Spt16_N"/>
</dbReference>
<dbReference type="InterPro" id="IPR036005">
    <property type="entry name" value="Creatinase/aminopeptidase-like"/>
</dbReference>
<dbReference type="InterPro" id="IPR000587">
    <property type="entry name" value="Creatinase_N"/>
</dbReference>
<dbReference type="InterPro" id="IPR000994">
    <property type="entry name" value="Pept_M24"/>
</dbReference>
<dbReference type="InterPro" id="IPR033740">
    <property type="entry name" value="Pept_M24B"/>
</dbReference>
<dbReference type="InterPro" id="IPR032416">
    <property type="entry name" value="Peptidase_M24_C"/>
</dbReference>
<dbReference type="InterPro" id="IPR001131">
    <property type="entry name" value="Peptidase_M24B_aminopep-P_CS"/>
</dbReference>
<dbReference type="InterPro" id="IPR050422">
    <property type="entry name" value="X-Pro_aminopeptidase_P"/>
</dbReference>
<dbReference type="PANTHER" id="PTHR43763">
    <property type="entry name" value="XAA-PRO AMINOPEPTIDASE 1"/>
    <property type="match status" value="1"/>
</dbReference>
<dbReference type="PANTHER" id="PTHR43763:SF4">
    <property type="entry name" value="XAA-PRO AMINOPEPTIDASE 2"/>
    <property type="match status" value="1"/>
</dbReference>
<dbReference type="Pfam" id="PF01321">
    <property type="entry name" value="Creatinase_N"/>
    <property type="match status" value="1"/>
</dbReference>
<dbReference type="Pfam" id="PF16189">
    <property type="entry name" value="Creatinase_N_2"/>
    <property type="match status" value="1"/>
</dbReference>
<dbReference type="Pfam" id="PF00557">
    <property type="entry name" value="Peptidase_M24"/>
    <property type="match status" value="1"/>
</dbReference>
<dbReference type="Pfam" id="PF16188">
    <property type="entry name" value="Peptidase_M24_C"/>
    <property type="match status" value="1"/>
</dbReference>
<dbReference type="SUPFAM" id="SSF55920">
    <property type="entry name" value="Creatinase/aminopeptidase"/>
    <property type="match status" value="1"/>
</dbReference>
<dbReference type="SUPFAM" id="SSF53092">
    <property type="entry name" value="Creatinase/prolidase N-terminal domain"/>
    <property type="match status" value="1"/>
</dbReference>
<dbReference type="PROSITE" id="PS00491">
    <property type="entry name" value="PROLINE_PEPTIDASE"/>
    <property type="match status" value="1"/>
</dbReference>
<protein>
    <recommendedName>
        <fullName>Xaa-Pro aminopeptidase 2</fullName>
        <ecNumber evidence="4 6">3.4.11.9</ecNumber>
    </recommendedName>
    <alternativeName>
        <fullName>Aminoacylproline aminopeptidase</fullName>
    </alternativeName>
    <alternativeName>
        <fullName>Membrane-bound aminopeptidase P</fullName>
        <shortName>Membrane-bound APP</shortName>
        <shortName>Membrane-bound AmP</shortName>
        <shortName>mAmP</shortName>
    </alternativeName>
    <alternativeName>
        <fullName>X-Pro aminopeptidase 2</fullName>
    </alternativeName>
</protein>
<name>XPP2_PIG</name>
<keyword id="KW-0031">Aminopeptidase</keyword>
<keyword id="KW-1003">Cell membrane</keyword>
<keyword id="KW-0903">Direct protein sequencing</keyword>
<keyword id="KW-0325">Glycoprotein</keyword>
<keyword id="KW-0336">GPI-anchor</keyword>
<keyword id="KW-0378">Hydrolase</keyword>
<keyword id="KW-0449">Lipoprotein</keyword>
<keyword id="KW-0472">Membrane</keyword>
<keyword id="KW-0479">Metal-binding</keyword>
<keyword id="KW-0482">Metalloprotease</keyword>
<keyword id="KW-0645">Protease</keyword>
<keyword id="KW-1185">Reference proteome</keyword>
<keyword id="KW-0732">Signal</keyword>
<keyword id="KW-0862">Zinc</keyword>